<organism>
    <name type="scientific">Shigella sonnei (strain Ss046)</name>
    <dbReference type="NCBI Taxonomy" id="300269"/>
    <lineage>
        <taxon>Bacteria</taxon>
        <taxon>Pseudomonadati</taxon>
        <taxon>Pseudomonadota</taxon>
        <taxon>Gammaproteobacteria</taxon>
        <taxon>Enterobacterales</taxon>
        <taxon>Enterobacteriaceae</taxon>
        <taxon>Shigella</taxon>
    </lineage>
</organism>
<gene>
    <name evidence="1" type="primary">arnB</name>
    <name type="ordered locus">SSON_2314</name>
</gene>
<keyword id="KW-0032">Aminotransferase</keyword>
<keyword id="KW-0046">Antibiotic resistance</keyword>
<keyword id="KW-0441">Lipid A biosynthesis</keyword>
<keyword id="KW-0444">Lipid biosynthesis</keyword>
<keyword id="KW-0443">Lipid metabolism</keyword>
<keyword id="KW-0448">Lipopolysaccharide biosynthesis</keyword>
<keyword id="KW-0663">Pyridoxal phosphate</keyword>
<keyword id="KW-1185">Reference proteome</keyword>
<keyword id="KW-0808">Transferase</keyword>
<comment type="function">
    <text evidence="1">Catalyzes the conversion of UDP-4-keto-arabinose (UDP-Ara4O) to UDP-4-amino-4-deoxy-L-arabinose (UDP-L-Ara4N). The modified arabinose is attached to lipid A and is required for resistance to polymyxin and cationic antimicrobial peptides.</text>
</comment>
<comment type="catalytic activity">
    <reaction evidence="1">
        <text>UDP-4-amino-4-deoxy-beta-L-arabinose + 2-oxoglutarate = UDP-beta-L-threo-pentopyranos-4-ulose + L-glutamate</text>
        <dbReference type="Rhea" id="RHEA:24710"/>
        <dbReference type="ChEBI" id="CHEBI:16810"/>
        <dbReference type="ChEBI" id="CHEBI:29985"/>
        <dbReference type="ChEBI" id="CHEBI:58708"/>
        <dbReference type="ChEBI" id="CHEBI:58710"/>
        <dbReference type="EC" id="2.6.1.87"/>
    </reaction>
</comment>
<comment type="cofactor">
    <cofactor evidence="1">
        <name>pyridoxal 5'-phosphate</name>
        <dbReference type="ChEBI" id="CHEBI:597326"/>
    </cofactor>
</comment>
<comment type="pathway">
    <text evidence="1">Nucleotide-sugar biosynthesis; UDP-4-deoxy-4-formamido-beta-L-arabinose biosynthesis; UDP-4-deoxy-4-formamido-beta-L-arabinose from UDP-alpha-D-glucuronate: step 2/3.</text>
</comment>
<comment type="pathway">
    <text evidence="1">Bacterial outer membrane biogenesis; lipopolysaccharide biosynthesis.</text>
</comment>
<comment type="subunit">
    <text evidence="1">Homodimer.</text>
</comment>
<comment type="similarity">
    <text evidence="1">Belongs to the DegT/DnrJ/EryC1 family. ArnB subfamily.</text>
</comment>
<comment type="sequence caution" evidence="2">
    <conflict type="erroneous initiation">
        <sequence resource="EMBL-CDS" id="AAZ88959"/>
    </conflict>
</comment>
<protein>
    <recommendedName>
        <fullName evidence="1">UDP-4-amino-4-deoxy-L-arabinose--oxoglutarate aminotransferase</fullName>
        <ecNumber evidence="1">2.6.1.87</ecNumber>
    </recommendedName>
    <alternativeName>
        <fullName evidence="1">UDP-(beta-L-threo-pentapyranosyl-4''-ulose diphosphate) aminotransferase</fullName>
        <shortName evidence="1">UDP-Ara4O aminotransferase</shortName>
    </alternativeName>
    <alternativeName>
        <fullName evidence="1">UDP-4-amino-4-deoxy-L-arabinose aminotransferase</fullName>
    </alternativeName>
</protein>
<reference key="1">
    <citation type="journal article" date="2005" name="Nucleic Acids Res.">
        <title>Genome dynamics and diversity of Shigella species, the etiologic agents of bacillary dysentery.</title>
        <authorList>
            <person name="Yang F."/>
            <person name="Yang J."/>
            <person name="Zhang X."/>
            <person name="Chen L."/>
            <person name="Jiang Y."/>
            <person name="Yan Y."/>
            <person name="Tang X."/>
            <person name="Wang J."/>
            <person name="Xiong Z."/>
            <person name="Dong J."/>
            <person name="Xue Y."/>
            <person name="Zhu Y."/>
            <person name="Xu X."/>
            <person name="Sun L."/>
            <person name="Chen S."/>
            <person name="Nie H."/>
            <person name="Peng J."/>
            <person name="Xu J."/>
            <person name="Wang Y."/>
            <person name="Yuan Z."/>
            <person name="Wen Y."/>
            <person name="Yao Z."/>
            <person name="Shen Y."/>
            <person name="Qiang B."/>
            <person name="Hou Y."/>
            <person name="Yu J."/>
            <person name="Jin Q."/>
        </authorList>
    </citation>
    <scope>NUCLEOTIDE SEQUENCE [LARGE SCALE GENOMIC DNA]</scope>
    <source>
        <strain>Ss046</strain>
    </source>
</reference>
<evidence type="ECO:0000255" key="1">
    <source>
        <dbReference type="HAMAP-Rule" id="MF_01167"/>
    </source>
</evidence>
<evidence type="ECO:0000305" key="2"/>
<sequence length="379" mass="41623">MSEFLPFSRPAMGVEELAAVKEVLESGWITTGPKNQALEQAFCQLTGNQHAIAVSSATAGMHITLMALEIGKGDEVITPSLTWVSTLNMISLLGATPVMVDVDRDTLMVTPEAIESAITPRTKAIIPVHYAGAPADIDAIRAIGERYGIAVIEDAAHAVGTYYKGRHIGAKGTAIFSFHAIKNITCAEGGLIVTDNENLARQLRMLKFHGLGVDAYDRQTWGRAPQAEVLTPGYKYNLTDINAAIALTQLAKLEHLNTHRREIAQQYQQALAALPFQPLSLPAWPHVHAWHLFIIRVDEQRCGISRDALMEALKERGIGTGLHFRAAHTQKYYRERFPTLSLPNTEWNSERICSLPLFPDMTTADADRVITALQQLAGQ</sequence>
<dbReference type="EC" id="2.6.1.87" evidence="1"/>
<dbReference type="EMBL" id="CP000038">
    <property type="protein sequence ID" value="AAZ88959.1"/>
    <property type="status" value="ALT_INIT"/>
    <property type="molecule type" value="Genomic_DNA"/>
</dbReference>
<dbReference type="RefSeq" id="WP_011310243.1">
    <property type="nucleotide sequence ID" value="NC_007384.1"/>
</dbReference>
<dbReference type="SMR" id="Q3YZV3"/>
<dbReference type="KEGG" id="ssn:SSON_2314"/>
<dbReference type="HOGENOM" id="CLU_033332_0_3_6"/>
<dbReference type="UniPathway" id="UPA00030"/>
<dbReference type="UniPathway" id="UPA00032">
    <property type="reaction ID" value="UER00493"/>
</dbReference>
<dbReference type="Proteomes" id="UP000002529">
    <property type="component" value="Chromosome"/>
</dbReference>
<dbReference type="GO" id="GO:0016020">
    <property type="term" value="C:membrane"/>
    <property type="evidence" value="ECO:0007669"/>
    <property type="project" value="GOC"/>
</dbReference>
<dbReference type="GO" id="GO:0030170">
    <property type="term" value="F:pyridoxal phosphate binding"/>
    <property type="evidence" value="ECO:0007669"/>
    <property type="project" value="TreeGrafter"/>
</dbReference>
<dbReference type="GO" id="GO:0099620">
    <property type="term" value="F:UDP-4-amino-4-deoxy-L-arabinose aminotransferase"/>
    <property type="evidence" value="ECO:0007669"/>
    <property type="project" value="UniProtKB-EC"/>
</dbReference>
<dbReference type="GO" id="GO:0009245">
    <property type="term" value="P:lipid A biosynthetic process"/>
    <property type="evidence" value="ECO:0007669"/>
    <property type="project" value="UniProtKB-KW"/>
</dbReference>
<dbReference type="GO" id="GO:0009103">
    <property type="term" value="P:lipopolysaccharide biosynthetic process"/>
    <property type="evidence" value="ECO:0007669"/>
    <property type="project" value="UniProtKB-UniRule"/>
</dbReference>
<dbReference type="GO" id="GO:0046677">
    <property type="term" value="P:response to antibiotic"/>
    <property type="evidence" value="ECO:0007669"/>
    <property type="project" value="UniProtKB-KW"/>
</dbReference>
<dbReference type="CDD" id="cd00616">
    <property type="entry name" value="AHBA_syn"/>
    <property type="match status" value="1"/>
</dbReference>
<dbReference type="FunFam" id="3.40.640.10:FF:000040">
    <property type="entry name" value="UDP-4-amino-4-deoxy-L-arabinose--oxoglutarate aminotransferase"/>
    <property type="match status" value="1"/>
</dbReference>
<dbReference type="FunFam" id="3.90.1150.10:FF:000030">
    <property type="entry name" value="UDP-4-amino-4-deoxy-L-arabinose--oxoglutarate aminotransferase"/>
    <property type="match status" value="1"/>
</dbReference>
<dbReference type="Gene3D" id="3.90.1150.10">
    <property type="entry name" value="Aspartate Aminotransferase, domain 1"/>
    <property type="match status" value="1"/>
</dbReference>
<dbReference type="Gene3D" id="3.40.640.10">
    <property type="entry name" value="Type I PLP-dependent aspartate aminotransferase-like (Major domain)"/>
    <property type="match status" value="1"/>
</dbReference>
<dbReference type="HAMAP" id="MF_01167">
    <property type="entry name" value="ArnB_transfer"/>
    <property type="match status" value="1"/>
</dbReference>
<dbReference type="InterPro" id="IPR022850">
    <property type="entry name" value="ArnB_NH2Trfase"/>
</dbReference>
<dbReference type="InterPro" id="IPR000653">
    <property type="entry name" value="DegT/StrS_aminotransferase"/>
</dbReference>
<dbReference type="InterPro" id="IPR015424">
    <property type="entry name" value="PyrdxlP-dep_Trfase"/>
</dbReference>
<dbReference type="InterPro" id="IPR015421">
    <property type="entry name" value="PyrdxlP-dep_Trfase_major"/>
</dbReference>
<dbReference type="InterPro" id="IPR015422">
    <property type="entry name" value="PyrdxlP-dep_Trfase_small"/>
</dbReference>
<dbReference type="NCBIfam" id="NF008658">
    <property type="entry name" value="PRK11658.1"/>
    <property type="match status" value="1"/>
</dbReference>
<dbReference type="PANTHER" id="PTHR30244">
    <property type="entry name" value="TRANSAMINASE"/>
    <property type="match status" value="1"/>
</dbReference>
<dbReference type="PANTHER" id="PTHR30244:SF41">
    <property type="entry name" value="UDP-4-AMINO-4-DEOXY-L-ARABINOSE--OXOGLUTARATE AMINOTRANSFERASE"/>
    <property type="match status" value="1"/>
</dbReference>
<dbReference type="Pfam" id="PF01041">
    <property type="entry name" value="DegT_DnrJ_EryC1"/>
    <property type="match status" value="1"/>
</dbReference>
<dbReference type="PIRSF" id="PIRSF000390">
    <property type="entry name" value="PLP_StrS"/>
    <property type="match status" value="1"/>
</dbReference>
<dbReference type="SUPFAM" id="SSF53383">
    <property type="entry name" value="PLP-dependent transferases"/>
    <property type="match status" value="1"/>
</dbReference>
<proteinExistence type="inferred from homology"/>
<name>ARNB_SHISS</name>
<feature type="chain" id="PRO_0000380546" description="UDP-4-amino-4-deoxy-L-arabinose--oxoglutarate aminotransferase">
    <location>
        <begin position="1"/>
        <end position="379"/>
    </location>
</feature>
<feature type="modified residue" description="N6-(pyridoxal phosphate)lysine" evidence="1">
    <location>
        <position position="182"/>
    </location>
</feature>
<accession>Q3YZV3</accession>